<reference key="1">
    <citation type="journal article" date="2005" name="Nature">
        <title>The map-based sequence of the rice genome.</title>
        <authorList>
            <consortium name="International rice genome sequencing project (IRGSP)"/>
        </authorList>
    </citation>
    <scope>NUCLEOTIDE SEQUENCE [LARGE SCALE GENOMIC DNA]</scope>
    <source>
        <strain>cv. Nipponbare</strain>
    </source>
</reference>
<reference key="2">
    <citation type="journal article" date="2008" name="Nucleic Acids Res.">
        <title>The rice annotation project database (RAP-DB): 2008 update.</title>
        <authorList>
            <consortium name="The rice annotation project (RAP)"/>
        </authorList>
    </citation>
    <scope>GENOME REANNOTATION</scope>
    <source>
        <strain>cv. Nipponbare</strain>
    </source>
</reference>
<reference key="3">
    <citation type="journal article" date="2004" name="Plant J.">
        <title>Overexpression of a novel small peptide ROTUNDIFOLIA4 decreases cell proliferation and alters leaf shape in Arabidopsis thaliana.</title>
        <authorList>
            <person name="Narita N.N."/>
            <person name="Moore S."/>
            <person name="Horiguchi G."/>
            <person name="Kubo M."/>
            <person name="Demura T."/>
            <person name="Fukuda H."/>
            <person name="Goodrich J."/>
            <person name="Tsukaya H."/>
        </authorList>
    </citation>
    <scope>DISRUPTION PHENOTYPE</scope>
    <scope>GENE FAMILY</scope>
</reference>
<reference key="4">
    <citation type="journal article" date="2015" name="J. Plant Res.">
        <title>Comparative analysis of the RTFL peptide family on the control of plant organogenesis.</title>
        <authorList>
            <person name="Guo P."/>
            <person name="Yoshimura A."/>
            <person name="Ishikawa N."/>
            <person name="Yamaguchi T."/>
            <person name="Guo Y."/>
            <person name="Tsukaya H."/>
        </authorList>
    </citation>
    <scope>REVIEW</scope>
    <scope>GENE FAMILY</scope>
    <scope>NOMENCLATURE</scope>
    <source>
        <strain>cv. Taichung 65</strain>
    </source>
</reference>
<dbReference type="EMBL" id="AP014965">
    <property type="protein sequence ID" value="BAT07358.1"/>
    <property type="molecule type" value="Genomic_DNA"/>
</dbReference>
<dbReference type="PaxDb" id="39947-A0A0P0XL10"/>
<dbReference type="EnsemblPlants" id="Os09t0306632-00">
    <property type="protein sequence ID" value="Os09t0306632-00"/>
    <property type="gene ID" value="Os09g0306632"/>
</dbReference>
<dbReference type="Gramene" id="Os09t0306632-00">
    <property type="protein sequence ID" value="Os09t0306632-00"/>
    <property type="gene ID" value="Os09g0306632"/>
</dbReference>
<dbReference type="eggNOG" id="ENOG502R44C">
    <property type="taxonomic scope" value="Eukaryota"/>
</dbReference>
<dbReference type="InParanoid" id="A0A0P0XL10"/>
<dbReference type="OMA" id="ISYHTSH"/>
<dbReference type="OrthoDB" id="623113at2759"/>
<dbReference type="Proteomes" id="UP000059680">
    <property type="component" value="Chromosome 9"/>
</dbReference>
<dbReference type="GO" id="GO:0005886">
    <property type="term" value="C:plasma membrane"/>
    <property type="evidence" value="ECO:0007669"/>
    <property type="project" value="UniProtKB-SubCell"/>
</dbReference>
<dbReference type="GO" id="GO:0008285">
    <property type="term" value="P:negative regulation of cell population proliferation"/>
    <property type="evidence" value="ECO:0007669"/>
    <property type="project" value="InterPro"/>
</dbReference>
<dbReference type="GO" id="GO:0048367">
    <property type="term" value="P:shoot system development"/>
    <property type="evidence" value="ECO:0007669"/>
    <property type="project" value="UniProtKB-ARBA"/>
</dbReference>
<dbReference type="InterPro" id="IPR012552">
    <property type="entry name" value="DVL"/>
</dbReference>
<dbReference type="InterPro" id="IPR051525">
    <property type="entry name" value="DVL_RTFL_regulatory"/>
</dbReference>
<dbReference type="PANTHER" id="PTHR33102">
    <property type="entry name" value="DVL19-RELATED-RELATED"/>
    <property type="match status" value="1"/>
</dbReference>
<dbReference type="Pfam" id="PF08137">
    <property type="entry name" value="DVL"/>
    <property type="match status" value="1"/>
</dbReference>
<sequence>MAYPLLCHYIKAPHSSFPLIPHTSHYILQLVYLHLFHPLPCTQHSHQTMKIEGRRGQMGRLNRAFREKRARFYIFRRCVIMLLRWSD</sequence>
<proteinExistence type="inferred from homology"/>
<name>RTFL2_ORYSJ</name>
<gene>
    <name evidence="5" type="primary">RTFL2</name>
    <name evidence="7" type="ordered locus">Os09g0306632</name>
    <name evidence="7" type="ORF">OSNPB_090306632</name>
</gene>
<comment type="function">
    <text evidence="1">Small polypeptide acting as a regulatory molecule which coordinates cellular responses required for differentiation, growth and development, probably by restricting polar cell proliferation in lateral organs.</text>
</comment>
<comment type="subcellular location">
    <subcellularLocation>
        <location evidence="2">Cell membrane</location>
        <topology evidence="3">Single-pass membrane protein</topology>
    </subcellularLocation>
</comment>
<comment type="disruption phenotype">
    <text evidence="4">No visible phenotype.</text>
</comment>
<comment type="similarity">
    <text evidence="6">Belongs to the DVL/RTFL small polypeptides family.</text>
</comment>
<keyword id="KW-1003">Cell membrane</keyword>
<keyword id="KW-0217">Developmental protein</keyword>
<keyword id="KW-0472">Membrane</keyword>
<keyword id="KW-1185">Reference proteome</keyword>
<keyword id="KW-0812">Transmembrane</keyword>
<keyword id="KW-1133">Transmembrane helix</keyword>
<organism>
    <name type="scientific">Oryza sativa subsp. japonica</name>
    <name type="common">Rice</name>
    <dbReference type="NCBI Taxonomy" id="39947"/>
    <lineage>
        <taxon>Eukaryota</taxon>
        <taxon>Viridiplantae</taxon>
        <taxon>Streptophyta</taxon>
        <taxon>Embryophyta</taxon>
        <taxon>Tracheophyta</taxon>
        <taxon>Spermatophyta</taxon>
        <taxon>Magnoliopsida</taxon>
        <taxon>Liliopsida</taxon>
        <taxon>Poales</taxon>
        <taxon>Poaceae</taxon>
        <taxon>BOP clade</taxon>
        <taxon>Oryzoideae</taxon>
        <taxon>Oryzeae</taxon>
        <taxon>Oryzinae</taxon>
        <taxon>Oryza</taxon>
        <taxon>Oryza sativa</taxon>
    </lineage>
</organism>
<protein>
    <recommendedName>
        <fullName evidence="5">Small polypeptide ROTUNDIFOLIA LIKE 2</fullName>
        <shortName evidence="5">OsRTFL2</shortName>
        <shortName evidence="5">Small polypeptide ROT-FOUR-LIKE 2</shortName>
    </recommendedName>
</protein>
<evidence type="ECO:0000250" key="1">
    <source>
        <dbReference type="UniProtKB" id="A0A5S6RB44"/>
    </source>
</evidence>
<evidence type="ECO:0000250" key="2">
    <source>
        <dbReference type="UniProtKB" id="Q7XXN8"/>
    </source>
</evidence>
<evidence type="ECO:0000255" key="3"/>
<evidence type="ECO:0000269" key="4">
    <source>
    </source>
</evidence>
<evidence type="ECO:0000303" key="5">
    <source>
    </source>
</evidence>
<evidence type="ECO:0000305" key="6"/>
<evidence type="ECO:0000312" key="7">
    <source>
        <dbReference type="EMBL" id="BAT07358.1"/>
    </source>
</evidence>
<feature type="chain" id="PRO_0000452794" description="Small polypeptide ROTUNDIFOLIA LIKE 2">
    <location>
        <begin position="1"/>
        <end position="87"/>
    </location>
</feature>
<feature type="transmembrane region" description="Helical" evidence="3">
    <location>
        <begin position="19"/>
        <end position="35"/>
    </location>
</feature>
<feature type="region of interest" description="Required for DVL/RTFL small polypeptide activity" evidence="2">
    <location>
        <begin position="56"/>
        <end position="87"/>
    </location>
</feature>
<accession>A0A0P0XL10</accession>